<sequence>MYSCLSGGLGNQMFQYAAAYILQRKLKQRSLVLDDSYFLDCSNRDTRRRFELNQFNICYDRLTTSKEKKEISIIRHVNRYRLPLFVTNSIFGVLLKKNYLPEAKFYEFLNNCKLQVKNGYCLFSYFQDATLIDSHRDMILPLFQINEDLLNLCNDLHIYKKVICENANTTSLHIRRGDYITNPHASKFHGVLPMDYYEKAIRYIEDVQGEQVIIVFSDDVKWAENTFANQPNYYVVNNSECEYSAIDMFLMSKCKNNIIANSTYSWWGAWLNTFEDKIVVSPRKWFAGNNKSKLTMDSWINL</sequence>
<proteinExistence type="evidence at protein level"/>
<organism>
    <name type="scientific">Escherichia coli</name>
    <dbReference type="NCBI Taxonomy" id="562"/>
    <lineage>
        <taxon>Bacteria</taxon>
        <taxon>Pseudomonadati</taxon>
        <taxon>Pseudomonadota</taxon>
        <taxon>Gammaproteobacteria</taxon>
        <taxon>Enterobacterales</taxon>
        <taxon>Enterobacteriaceae</taxon>
        <taxon>Escherichia</taxon>
    </lineage>
</organism>
<accession>Q58YV9</accession>
<accession>Q5JBG3</accession>
<name>WBNK_ECOLX</name>
<protein>
    <recommendedName>
        <fullName evidence="7">O-antigen biosynthesis glycosyltransferase WbnK</fullName>
        <ecNumber evidence="1 3">2.4.1.308</ecNumber>
    </recommendedName>
    <alternativeName>
        <fullName evidence="7">GDP-Fuc:beta-D-Gal-1,3-alpha-D-GalNAc-1,3-alpha-GalNAc-diphosphoundecaprenol alpha-1,2-fucosyltransferase</fullName>
    </alternativeName>
</protein>
<keyword id="KW-0328">Glycosyltransferase</keyword>
<keyword id="KW-0448">Lipopolysaccharide biosynthesis</keyword>
<keyword id="KW-0808">Transferase</keyword>
<gene>
    <name evidence="4" type="primary">wbnK</name>
    <name evidence="6" type="synonym">wbwK</name>
    <name evidence="5" type="synonym">wcmD</name>
</gene>
<dbReference type="EC" id="2.4.1.308" evidence="1 3"/>
<dbReference type="EMBL" id="AY220982">
    <property type="protein sequence ID" value="AAO37719.1"/>
    <property type="molecule type" value="Genomic_DNA"/>
</dbReference>
<dbReference type="EMBL" id="AY667408">
    <property type="protein sequence ID" value="AAV80759.1"/>
    <property type="molecule type" value="Genomic_DNA"/>
</dbReference>
<dbReference type="EMBL" id="AY670704">
    <property type="protein sequence ID" value="AAV85963.1"/>
    <property type="molecule type" value="Genomic_DNA"/>
</dbReference>
<dbReference type="RefSeq" id="WP_000286642.1">
    <property type="nucleotide sequence ID" value="NZ_WSXE01000046.1"/>
</dbReference>
<dbReference type="CAZy" id="GT11">
    <property type="family name" value="Glycosyltransferase Family 11"/>
</dbReference>
<dbReference type="KEGG" id="ag:AAV80759"/>
<dbReference type="BioCyc" id="MetaCyc:MONOMER-18061"/>
<dbReference type="BRENDA" id="2.4.1.308">
    <property type="organism ID" value="2026"/>
</dbReference>
<dbReference type="UniPathway" id="UPA00281"/>
<dbReference type="GO" id="GO:0016020">
    <property type="term" value="C:membrane"/>
    <property type="evidence" value="ECO:0007669"/>
    <property type="project" value="InterPro"/>
</dbReference>
<dbReference type="GO" id="GO:0008107">
    <property type="term" value="F:galactoside 2-alpha-L-fucosyltransferase activity"/>
    <property type="evidence" value="ECO:0007669"/>
    <property type="project" value="InterPro"/>
</dbReference>
<dbReference type="GO" id="GO:0036065">
    <property type="term" value="P:fucosylation"/>
    <property type="evidence" value="ECO:0007669"/>
    <property type="project" value="TreeGrafter"/>
</dbReference>
<dbReference type="GO" id="GO:0009243">
    <property type="term" value="P:O antigen biosynthetic process"/>
    <property type="evidence" value="ECO:0007669"/>
    <property type="project" value="UniProtKB-UniPathway"/>
</dbReference>
<dbReference type="GO" id="GO:0006486">
    <property type="term" value="P:protein glycosylation"/>
    <property type="evidence" value="ECO:0007669"/>
    <property type="project" value="TreeGrafter"/>
</dbReference>
<dbReference type="CDD" id="cd11301">
    <property type="entry name" value="Fut1_Fut2_like"/>
    <property type="match status" value="1"/>
</dbReference>
<dbReference type="Gene3D" id="3.40.50.11350">
    <property type="match status" value="1"/>
</dbReference>
<dbReference type="InterPro" id="IPR002516">
    <property type="entry name" value="Glyco_trans_11"/>
</dbReference>
<dbReference type="PANTHER" id="PTHR11927">
    <property type="entry name" value="GALACTOSIDE 2-L-FUCOSYLTRANSFERASE"/>
    <property type="match status" value="1"/>
</dbReference>
<dbReference type="PANTHER" id="PTHR11927:SF9">
    <property type="entry name" value="L-FUCOSYLTRANSFERASE"/>
    <property type="match status" value="1"/>
</dbReference>
<dbReference type="Pfam" id="PF01531">
    <property type="entry name" value="Glyco_transf_11"/>
    <property type="match status" value="1"/>
</dbReference>
<reference key="1">
    <citation type="journal article" date="2005" name="Appl. Environ. Microbiol.">
        <title>Molecular analysis of the O-antigen gene cluster of Escherichia coli O86:B7 and characterization of the chain length determinant gene (wzz).</title>
        <authorList>
            <person name="Guo H."/>
            <person name="Yi W."/>
            <person name="Shao J."/>
            <person name="Lu Y."/>
            <person name="Zhang W."/>
            <person name="Song J."/>
            <person name="Wang P.G."/>
        </authorList>
    </citation>
    <scope>NUCLEOTIDE SEQUENCE [GENOMIC DNA]</scope>
    <source>
        <strain>O86:K61:B7 / ATCC 12701</strain>
    </source>
</reference>
<reference key="2">
    <citation type="journal article" date="2005" name="J. Am. Chem. Soc.">
        <title>Escherichia coli O86 O-antigen biosynthetic gene cluster and stepwise enzymatic synthesis of human blood group B antigen tetrasaccharide.</title>
        <authorList>
            <person name="Yi W."/>
            <person name="Shao J."/>
            <person name="Zhu L."/>
            <person name="Li M."/>
            <person name="Singh M."/>
            <person name="Lu Y."/>
            <person name="Lin S."/>
            <person name="Li H."/>
            <person name="Ryu K."/>
            <person name="Shen J."/>
            <person name="Guo H."/>
            <person name="Yao Q."/>
            <person name="Bush C.A."/>
            <person name="Wang P.G."/>
        </authorList>
    </citation>
    <scope>NUCLEOTIDE SEQUENCE [GENOMIC DNA]</scope>
    <scope>FUNCTION</scope>
    <scope>CATALYTIC ACTIVITY</scope>
    <scope>PATHWAY</scope>
    <source>
        <strain>O86:K62:H2</strain>
    </source>
</reference>
<reference key="3">
    <citation type="journal article" date="2005" name="Vet. Microbiol.">
        <title>Characterization of Escherichia coli O86 O-antigen gene cluster and identification of O86-specific genes.</title>
        <authorList>
            <person name="Feng L."/>
            <person name="Han W."/>
            <person name="Wang Q."/>
            <person name="Bastin D.A."/>
            <person name="Wang L."/>
        </authorList>
    </citation>
    <scope>NUCLEOTIDE SEQUENCE [GENOMIC DNA]</scope>
    <source>
        <strain>O86</strain>
    </source>
</reference>
<reference key="4">
    <citation type="journal article" date="2010" name="Nat. Chem. Biol.">
        <title>In vitro bacterial polysaccharide biosynthesis: defining the functions of Wzy and Wzz.</title>
        <authorList>
            <person name="Woodward R."/>
            <person name="Yi W."/>
            <person name="Li L."/>
            <person name="Zhao G."/>
            <person name="Eguchi H."/>
            <person name="Sridhar P.R."/>
            <person name="Guo H."/>
            <person name="Song J.K."/>
            <person name="Motari E."/>
            <person name="Cai L."/>
            <person name="Kelleher P."/>
            <person name="Liu X."/>
            <person name="Han W."/>
            <person name="Zhang W."/>
            <person name="Ding Y."/>
            <person name="Li M."/>
            <person name="Wang P.G."/>
        </authorList>
    </citation>
    <scope>FUNCTION</scope>
    <scope>CATALYTIC ACTIVITY</scope>
    <scope>PATHWAY</scope>
    <source>
        <strain>O86:K61:B7 / ATCC 12701</strain>
    </source>
</reference>
<comment type="function">
    <text evidence="1 3">Involved in the assembly of the O-repeating unit during O-antigen biosynthesis.</text>
</comment>
<comment type="catalytic activity">
    <reaction evidence="1 3">
        <text>beta-D-Gal-(1-&gt;3)-alpha-D-GalNAc-(1-&gt;3)-alpha-D-GalNAc-di-trans,octa-cis-undecaprenyl diphosphate + GDP-beta-L-fucose = alpha-L-Fuc-(1-&gt;2)-beta-D-Gal-(1-&gt;3)-alpha-D-GalNAc-(1-&gt;3)-alpha-D-GalNAc-di-trans,octa-cis-undecaprenyl diphosphate + GDP + H(+)</text>
        <dbReference type="Rhea" id="RHEA:36771"/>
        <dbReference type="ChEBI" id="CHEBI:15378"/>
        <dbReference type="ChEBI" id="CHEBI:57273"/>
        <dbReference type="ChEBI" id="CHEBI:58189"/>
        <dbReference type="ChEBI" id="CHEBI:73988"/>
        <dbReference type="ChEBI" id="CHEBI:73991"/>
        <dbReference type="EC" id="2.4.1.308"/>
    </reaction>
</comment>
<comment type="pathway">
    <text evidence="1 3">Bacterial outer membrane biogenesis; LPS O-antigen biosynthesis.</text>
</comment>
<comment type="miscellaneous">
    <text evidence="2">O86:H2 and O86:B7 subtypes share the same O unit, but the O units are polymerized from different terminal sugars in different glycosidic linkages.</text>
</comment>
<comment type="similarity">
    <text evidence="7">Belongs to the glycosyltransferase 11 family.</text>
</comment>
<evidence type="ECO:0000269" key="1">
    <source>
    </source>
</evidence>
<evidence type="ECO:0000269" key="2">
    <source>
    </source>
</evidence>
<evidence type="ECO:0000269" key="3">
    <source>
    </source>
</evidence>
<evidence type="ECO:0000303" key="4">
    <source>
    </source>
</evidence>
<evidence type="ECO:0000303" key="5">
    <source>
    </source>
</evidence>
<evidence type="ECO:0000303" key="6">
    <source>
    </source>
</evidence>
<evidence type="ECO:0000305" key="7"/>
<feature type="chain" id="PRO_0000430650" description="O-antigen biosynthesis glycosyltransferase WbnK">
    <location>
        <begin position="1"/>
        <end position="302"/>
    </location>
</feature>
<feature type="sequence conflict" description="In Ref. 1; AAO37719." ref="1">
    <original>N</original>
    <variation>H</variation>
    <location>
        <position position="151"/>
    </location>
</feature>